<keyword id="KW-0007">Acetylation</keyword>
<keyword id="KW-0012">Acyltransferase</keyword>
<keyword id="KW-0963">Cytoplasm</keyword>
<keyword id="KW-1185">Reference proteome</keyword>
<keyword id="KW-0808">Transferase</keyword>
<name>ARY1_RAT</name>
<sequence>MDIEAYFERIGYKNSVNKLDLATLTEVLQHQMRAVPFENLSMHCGEAMCLGLEATFDHIVRKKRGGWCLQVNHLLYWALTKMGFETTMLGGYVYITPVNKYSSEMVHLLVQVTISDRNYIVDSAYGSSYQMWEPLELTSGKDQPQVPAIFRLTEENGTWYLDQIRREQDVPNQEFVNSDLLEKSKYRKIYSFTLEPRTIEDFEYVNTYLQTSPASVFVSTSFCSLQTSEGVCCLIGSTLTSRRFSYKDNVDLVEFKSLTEEEIEDVLKTTFGISLEKKFVPKHGELVFTI</sequence>
<dbReference type="EC" id="2.3.1.5" evidence="3 4"/>
<dbReference type="EMBL" id="U01344">
    <property type="protein sequence ID" value="AAA70157.1"/>
    <property type="molecule type" value="mRNA"/>
</dbReference>
<dbReference type="EMBL" id="U01343">
    <property type="protein sequence ID" value="AAA70156.1"/>
    <property type="molecule type" value="mRNA"/>
</dbReference>
<dbReference type="EMBL" id="U17260">
    <property type="protein sequence ID" value="AAA56771.1"/>
    <property type="molecule type" value="mRNA"/>
</dbReference>
<dbReference type="EMBL" id="U01345">
    <property type="protein sequence ID" value="AAA70158.1"/>
    <property type="molecule type" value="mRNA"/>
</dbReference>
<dbReference type="EMBL" id="BC078765">
    <property type="protein sequence ID" value="AAH78765.1"/>
    <property type="molecule type" value="mRNA"/>
</dbReference>
<dbReference type="PIR" id="I67465">
    <property type="entry name" value="I67465"/>
</dbReference>
<dbReference type="RefSeq" id="NP_001032392.1">
    <property type="nucleotide sequence ID" value="NM_001037315.1"/>
</dbReference>
<dbReference type="RefSeq" id="NP_001032393.1">
    <property type="nucleotide sequence ID" value="NM_001037316.2"/>
</dbReference>
<dbReference type="RefSeq" id="NP_446305.1">
    <property type="nucleotide sequence ID" value="NM_053853.2"/>
</dbReference>
<dbReference type="RefSeq" id="XP_006253063.1">
    <property type="nucleotide sequence ID" value="XM_006253001.4"/>
</dbReference>
<dbReference type="RefSeq" id="XP_006253064.1">
    <property type="nucleotide sequence ID" value="XM_006253002.5"/>
</dbReference>
<dbReference type="RefSeq" id="XP_006253066.1">
    <property type="nucleotide sequence ID" value="XM_006253004.5"/>
</dbReference>
<dbReference type="RefSeq" id="XP_017455467.1">
    <property type="nucleotide sequence ID" value="XM_017599978.3"/>
</dbReference>
<dbReference type="RefSeq" id="XP_038950080.1">
    <property type="nucleotide sequence ID" value="XM_039094152.2"/>
</dbReference>
<dbReference type="RefSeq" id="XP_038950081.1">
    <property type="nucleotide sequence ID" value="XM_039094153.2"/>
</dbReference>
<dbReference type="SMR" id="P50297"/>
<dbReference type="FunCoup" id="P50297">
    <property type="interactions" value="68"/>
</dbReference>
<dbReference type="STRING" id="10116.ENSRNOP00000018854"/>
<dbReference type="GlyGen" id="P50297">
    <property type="glycosylation" value="1 site"/>
</dbReference>
<dbReference type="iPTMnet" id="P50297"/>
<dbReference type="PhosphoSitePlus" id="P50297"/>
<dbReference type="jPOST" id="P50297"/>
<dbReference type="PaxDb" id="10116-ENSRNOP00000018854"/>
<dbReference type="DNASU" id="116631"/>
<dbReference type="Ensembl" id="ENSRNOT00000018854.7">
    <property type="protein sequence ID" value="ENSRNOP00000018854.3"/>
    <property type="gene ID" value="ENSRNOG00000049498.2"/>
</dbReference>
<dbReference type="Ensembl" id="ENSRNOT00000090726.2">
    <property type="protein sequence ID" value="ENSRNOP00000070053.1"/>
    <property type="gene ID" value="ENSRNOG00000049498.2"/>
</dbReference>
<dbReference type="Ensembl" id="ENSRNOT00000098891.1">
    <property type="protein sequence ID" value="ENSRNOP00000086542.1"/>
    <property type="gene ID" value="ENSRNOG00000049498.2"/>
</dbReference>
<dbReference type="Ensembl" id="ENSRNOT00000107612.1">
    <property type="protein sequence ID" value="ENSRNOP00000086645.1"/>
    <property type="gene ID" value="ENSRNOG00000049498.2"/>
</dbReference>
<dbReference type="GeneID" id="116631"/>
<dbReference type="KEGG" id="rno:116631"/>
<dbReference type="UCSC" id="RGD:70490">
    <property type="organism name" value="rat"/>
</dbReference>
<dbReference type="AGR" id="RGD:70490"/>
<dbReference type="CTD" id="9"/>
<dbReference type="RGD" id="70490">
    <property type="gene designation" value="Nat1"/>
</dbReference>
<dbReference type="eggNOG" id="ENOG502RD0D">
    <property type="taxonomic scope" value="Eukaryota"/>
</dbReference>
<dbReference type="GeneTree" id="ENSGT00390000012054"/>
<dbReference type="HOGENOM" id="CLU_049918_3_0_1"/>
<dbReference type="InParanoid" id="P50297"/>
<dbReference type="OMA" id="NYLLFWA"/>
<dbReference type="OrthoDB" id="10260017at2759"/>
<dbReference type="PhylomeDB" id="P50297"/>
<dbReference type="BRENDA" id="2.3.1.56">
    <property type="organism ID" value="5301"/>
</dbReference>
<dbReference type="Reactome" id="R-RNO-156582">
    <property type="pathway name" value="Acetylation"/>
</dbReference>
<dbReference type="Reactome" id="R-RNO-9753281">
    <property type="pathway name" value="Paracetamol ADME"/>
</dbReference>
<dbReference type="SABIO-RK" id="P50297"/>
<dbReference type="PRO" id="PR:P50297"/>
<dbReference type="Proteomes" id="UP000002494">
    <property type="component" value="Chromosome 16"/>
</dbReference>
<dbReference type="Bgee" id="ENSRNOG00000014055">
    <property type="expression patterns" value="Expressed in liver and 19 other cell types or tissues"/>
</dbReference>
<dbReference type="ExpressionAtlas" id="P50297">
    <property type="expression patterns" value="baseline and differential"/>
</dbReference>
<dbReference type="GO" id="GO:0005737">
    <property type="term" value="C:cytoplasm"/>
    <property type="evidence" value="ECO:0007669"/>
    <property type="project" value="UniProtKB-SubCell"/>
</dbReference>
<dbReference type="GO" id="GO:0004060">
    <property type="term" value="F:arylamine N-acetyltransferase activity"/>
    <property type="evidence" value="ECO:0000314"/>
    <property type="project" value="RGD"/>
</dbReference>
<dbReference type="GO" id="GO:0001889">
    <property type="term" value="P:liver development"/>
    <property type="evidence" value="ECO:0000270"/>
    <property type="project" value="RGD"/>
</dbReference>
<dbReference type="GO" id="GO:0097068">
    <property type="term" value="P:response to thyroxine"/>
    <property type="evidence" value="ECO:0000270"/>
    <property type="project" value="RGD"/>
</dbReference>
<dbReference type="FunFam" id="3.30.2140.20:FF:000001">
    <property type="entry name" value="Arylamine N-acetyltransferase 1"/>
    <property type="match status" value="1"/>
</dbReference>
<dbReference type="Gene3D" id="3.30.2140.20">
    <property type="match status" value="1"/>
</dbReference>
<dbReference type="InterPro" id="IPR001447">
    <property type="entry name" value="Arylamine_N-AcTrfase"/>
</dbReference>
<dbReference type="InterPro" id="IPR053710">
    <property type="entry name" value="Arylamine_NAT_domain_sf"/>
</dbReference>
<dbReference type="InterPro" id="IPR038765">
    <property type="entry name" value="Papain-like_cys_pep_sf"/>
</dbReference>
<dbReference type="PANTHER" id="PTHR11786:SF2">
    <property type="entry name" value="ARYLAMINE N-ACETYLTRANSFERASE 1"/>
    <property type="match status" value="1"/>
</dbReference>
<dbReference type="PANTHER" id="PTHR11786">
    <property type="entry name" value="N-HYDROXYARYLAMINE O-ACETYLTRANSFERASE"/>
    <property type="match status" value="1"/>
</dbReference>
<dbReference type="Pfam" id="PF00797">
    <property type="entry name" value="Acetyltransf_2"/>
    <property type="match status" value="1"/>
</dbReference>
<dbReference type="PRINTS" id="PR01543">
    <property type="entry name" value="ANATRNSFRASE"/>
</dbReference>
<dbReference type="SUPFAM" id="SSF54001">
    <property type="entry name" value="Cysteine proteinases"/>
    <property type="match status" value="1"/>
</dbReference>
<proteinExistence type="evidence at protein level"/>
<comment type="function">
    <text evidence="3 4">Participates in the detoxification of a plethora of hydrazine and arylamine drugs. Acetylates both arylamines and arylalkylamines.</text>
</comment>
<comment type="catalytic activity">
    <reaction evidence="3 4">
        <text>an arylamine + acetyl-CoA = an N-acetylarylamine + CoA</text>
        <dbReference type="Rhea" id="RHEA:16613"/>
        <dbReference type="ChEBI" id="CHEBI:13790"/>
        <dbReference type="ChEBI" id="CHEBI:50471"/>
        <dbReference type="ChEBI" id="CHEBI:57287"/>
        <dbReference type="ChEBI" id="CHEBI:57288"/>
        <dbReference type="EC" id="2.3.1.5"/>
    </reaction>
    <physiologicalReaction direction="left-to-right" evidence="6 7">
        <dbReference type="Rhea" id="RHEA:16614"/>
    </physiologicalReaction>
</comment>
<comment type="biophysicochemical properties">
    <kinetics>
        <KM evidence="4">0.64 uM for 4-aminoazobenzene</KM>
        <KM evidence="4">0.18 uM for 2-aminofluorene</KM>
        <Vmax evidence="4">47.0 nmol/min/mg enzyme toward 2-aminofluorene</Vmax>
        <Vmax evidence="4">41.8 nmol/min/mg enzyme toward 4-aminoazobenzene</Vmax>
    </kinetics>
</comment>
<comment type="subcellular location">
    <subcellularLocation>
        <location>Cytoplasm</location>
    </subcellularLocation>
</comment>
<comment type="similarity">
    <text evidence="5">Belongs to the arylamine N-acetyltransferase family.</text>
</comment>
<gene>
    <name type="primary">Nat1</name>
    <name type="synonym">Aac1</name>
</gene>
<accession>P50297</accession>
<protein>
    <recommendedName>
        <fullName>Arylamine N-acetyltransferase 1</fullName>
        <ecNumber evidence="3 4">2.3.1.5</ecNumber>
    </recommendedName>
    <alternativeName>
        <fullName>Arylamide acetylase 1</fullName>
    </alternativeName>
    <alternativeName>
        <fullName>N-acetyltransferase type 1</fullName>
        <shortName>AT-1</shortName>
        <shortName>NAT-1</shortName>
    </alternativeName>
</protein>
<organism>
    <name type="scientific">Rattus norvegicus</name>
    <name type="common">Rat</name>
    <dbReference type="NCBI Taxonomy" id="10116"/>
    <lineage>
        <taxon>Eukaryota</taxon>
        <taxon>Metazoa</taxon>
        <taxon>Chordata</taxon>
        <taxon>Craniata</taxon>
        <taxon>Vertebrata</taxon>
        <taxon>Euteleostomi</taxon>
        <taxon>Mammalia</taxon>
        <taxon>Eutheria</taxon>
        <taxon>Euarchontoglires</taxon>
        <taxon>Glires</taxon>
        <taxon>Rodentia</taxon>
        <taxon>Myomorpha</taxon>
        <taxon>Muroidea</taxon>
        <taxon>Muridae</taxon>
        <taxon>Murinae</taxon>
        <taxon>Rattus</taxon>
    </lineage>
</organism>
<evidence type="ECO:0000250" key="1"/>
<evidence type="ECO:0000250" key="2">
    <source>
        <dbReference type="UniProtKB" id="P18440"/>
    </source>
</evidence>
<evidence type="ECO:0000269" key="3">
    <source>
    </source>
</evidence>
<evidence type="ECO:0000269" key="4">
    <source>
    </source>
</evidence>
<evidence type="ECO:0000305" key="5"/>
<evidence type="ECO:0000305" key="6">
    <source>
    </source>
</evidence>
<evidence type="ECO:0000305" key="7">
    <source>
    </source>
</evidence>
<feature type="chain" id="PRO_0000107911" description="Arylamine N-acetyltransferase 1">
    <location>
        <begin position="1"/>
        <end position="290"/>
    </location>
</feature>
<feature type="active site" description="Acyl-thioester intermediate" evidence="1">
    <location>
        <position position="68"/>
    </location>
</feature>
<feature type="active site" evidence="1">
    <location>
        <position position="107"/>
    </location>
</feature>
<feature type="active site" evidence="1">
    <location>
        <position position="122"/>
    </location>
</feature>
<feature type="binding site" evidence="1">
    <location>
        <position position="103"/>
    </location>
    <ligand>
        <name>CoA</name>
        <dbReference type="ChEBI" id="CHEBI:57287"/>
    </ligand>
</feature>
<feature type="binding site" evidence="1">
    <location>
        <begin position="106"/>
        <end position="107"/>
    </location>
    <ligand>
        <name>substrate</name>
    </ligand>
</feature>
<feature type="binding site" evidence="1">
    <location>
        <position position="208"/>
    </location>
    <ligand>
        <name>CoA</name>
        <dbReference type="ChEBI" id="CHEBI:57287"/>
    </ligand>
</feature>
<feature type="modified residue" description="N-acetylmethionine" evidence="2">
    <location>
        <position position="1"/>
    </location>
</feature>
<reference key="1">
    <citation type="journal article" date="1995" name="Eur. J. Biochem.">
        <title>Complementary DNAs for two arylamine N-acetyltransferases with identical 5' non-coding regions from rat pineal gland.</title>
        <authorList>
            <person name="Ebisawa T."/>
            <person name="Sasaki Y."/>
            <person name="Deguchi T."/>
        </authorList>
    </citation>
    <scope>NUCLEOTIDE SEQUENCE [MRNA]</scope>
    <scope>FUNCTION</scope>
    <scope>CATALYTIC ACTIVITY</scope>
    <source>
        <strain>Wistar</strain>
        <tissue>Pineal gland</tissue>
    </source>
</reference>
<reference key="2">
    <citation type="submission" date="1994-12" db="EMBL/GenBank/DDBJ databases">
        <title>Recombinant rat and hamster acetyltransferases-1 and -2: relative rates of N-acetylation of arylamines and N,O-acyltransfer with arylhydroxamic acids.</title>
        <authorList>
            <person name="Jones R.F."/>
            <person name="Gott B."/>
            <person name="Land S.J."/>
            <person name="Park J."/>
            <person name="King C.M."/>
        </authorList>
    </citation>
    <scope>NUCLEOTIDE SEQUENCE [MRNA]</scope>
    <source>
        <strain>Sprague-Dawley</strain>
        <tissue>Liver</tissue>
    </source>
</reference>
<reference key="3">
    <citation type="journal article" date="2004" name="Genome Res.">
        <title>The status, quality, and expansion of the NIH full-length cDNA project: the Mammalian Gene Collection (MGC).</title>
        <authorList>
            <consortium name="The MGC Project Team"/>
        </authorList>
    </citation>
    <scope>NUCLEOTIDE SEQUENCE [LARGE SCALE MRNA]</scope>
    <source>
        <tissue>Kidney</tissue>
    </source>
</reference>
<reference key="4">
    <citation type="journal article" date="1996" name="Carcinogenesis">
        <title>Recombinant rat and hamster N-acetyltransferases-1 and -2: relative rates of N-acetylation of arylamines and N,O-acyltransfer with arylhydroxamic acids.</title>
        <authorList>
            <person name="Jones R.F."/>
            <person name="Land S.J."/>
            <person name="King C.M."/>
        </authorList>
    </citation>
    <scope>FUNCTION</scope>
    <scope>CATALYTIC ACTIVITY</scope>
    <scope>BIOPHYSICOCHEMICAL PROPERTIES</scope>
</reference>